<comment type="function">
    <text evidence="1">Cell wall formation. Catalyzes the transfer of a GlcNAc subunit on undecaprenyl-pyrophosphoryl-MurNAc-pentapeptide (lipid intermediate I) to form undecaprenyl-pyrophosphoryl-MurNAc-(pentapeptide)GlcNAc (lipid intermediate II).</text>
</comment>
<comment type="catalytic activity">
    <reaction evidence="1">
        <text>di-trans,octa-cis-undecaprenyl diphospho-N-acetyl-alpha-D-muramoyl-L-alanyl-D-glutamyl-meso-2,6-diaminopimeloyl-D-alanyl-D-alanine + UDP-N-acetyl-alpha-D-glucosamine = di-trans,octa-cis-undecaprenyl diphospho-[N-acetyl-alpha-D-glucosaminyl-(1-&gt;4)]-N-acetyl-alpha-D-muramoyl-L-alanyl-D-glutamyl-meso-2,6-diaminopimeloyl-D-alanyl-D-alanine + UDP + H(+)</text>
        <dbReference type="Rhea" id="RHEA:31227"/>
        <dbReference type="ChEBI" id="CHEBI:15378"/>
        <dbReference type="ChEBI" id="CHEBI:57705"/>
        <dbReference type="ChEBI" id="CHEBI:58223"/>
        <dbReference type="ChEBI" id="CHEBI:61387"/>
        <dbReference type="ChEBI" id="CHEBI:61388"/>
        <dbReference type="EC" id="2.4.1.227"/>
    </reaction>
</comment>
<comment type="pathway">
    <text evidence="1">Cell wall biogenesis; peptidoglycan biosynthesis.</text>
</comment>
<comment type="subcellular location">
    <subcellularLocation>
        <location evidence="1">Cell inner membrane</location>
        <topology evidence="1">Peripheral membrane protein</topology>
        <orientation evidence="1">Cytoplasmic side</orientation>
    </subcellularLocation>
</comment>
<comment type="similarity">
    <text evidence="1">Belongs to the glycosyltransferase 28 family. MurG subfamily.</text>
</comment>
<feature type="chain" id="PRO_1000090465" description="UDP-N-acetylglucosamine--N-acetylmuramyl-(pentapeptide) pyrophosphoryl-undecaprenol N-acetylglucosamine transferase">
    <location>
        <begin position="1"/>
        <end position="355"/>
    </location>
</feature>
<feature type="binding site" evidence="1">
    <location>
        <begin position="15"/>
        <end position="17"/>
    </location>
    <ligand>
        <name>UDP-N-acetyl-alpha-D-glucosamine</name>
        <dbReference type="ChEBI" id="CHEBI:57705"/>
    </ligand>
</feature>
<feature type="binding site" evidence="1">
    <location>
        <position position="127"/>
    </location>
    <ligand>
        <name>UDP-N-acetyl-alpha-D-glucosamine</name>
        <dbReference type="ChEBI" id="CHEBI:57705"/>
    </ligand>
</feature>
<feature type="binding site" evidence="1">
    <location>
        <position position="163"/>
    </location>
    <ligand>
        <name>UDP-N-acetyl-alpha-D-glucosamine</name>
        <dbReference type="ChEBI" id="CHEBI:57705"/>
    </ligand>
</feature>
<feature type="binding site" evidence="1">
    <location>
        <position position="191"/>
    </location>
    <ligand>
        <name>UDP-N-acetyl-alpha-D-glucosamine</name>
        <dbReference type="ChEBI" id="CHEBI:57705"/>
    </ligand>
</feature>
<feature type="binding site" evidence="1">
    <location>
        <position position="244"/>
    </location>
    <ligand>
        <name>UDP-N-acetyl-alpha-D-glucosamine</name>
        <dbReference type="ChEBI" id="CHEBI:57705"/>
    </ligand>
</feature>
<feature type="binding site" evidence="1">
    <location>
        <begin position="263"/>
        <end position="268"/>
    </location>
    <ligand>
        <name>UDP-N-acetyl-alpha-D-glucosamine</name>
        <dbReference type="ChEBI" id="CHEBI:57705"/>
    </ligand>
</feature>
<feature type="binding site" evidence="1">
    <location>
        <position position="288"/>
    </location>
    <ligand>
        <name>UDP-N-acetyl-alpha-D-glucosamine</name>
        <dbReference type="ChEBI" id="CHEBI:57705"/>
    </ligand>
</feature>
<accession>B5F7W4</accession>
<reference key="1">
    <citation type="journal article" date="2011" name="J. Bacteriol.">
        <title>Comparative genomics of 28 Salmonella enterica isolates: evidence for CRISPR-mediated adaptive sublineage evolution.</title>
        <authorList>
            <person name="Fricke W.F."/>
            <person name="Mammel M.K."/>
            <person name="McDermott P.F."/>
            <person name="Tartera C."/>
            <person name="White D.G."/>
            <person name="Leclerc J.E."/>
            <person name="Ravel J."/>
            <person name="Cebula T.A."/>
        </authorList>
    </citation>
    <scope>NUCLEOTIDE SEQUENCE [LARGE SCALE GENOMIC DNA]</scope>
    <source>
        <strain>SL483</strain>
    </source>
</reference>
<organism>
    <name type="scientific">Salmonella agona (strain SL483)</name>
    <dbReference type="NCBI Taxonomy" id="454166"/>
    <lineage>
        <taxon>Bacteria</taxon>
        <taxon>Pseudomonadati</taxon>
        <taxon>Pseudomonadota</taxon>
        <taxon>Gammaproteobacteria</taxon>
        <taxon>Enterobacterales</taxon>
        <taxon>Enterobacteriaceae</taxon>
        <taxon>Salmonella</taxon>
    </lineage>
</organism>
<protein>
    <recommendedName>
        <fullName evidence="1">UDP-N-acetylglucosamine--N-acetylmuramyl-(pentapeptide) pyrophosphoryl-undecaprenol N-acetylglucosamine transferase</fullName>
        <ecNumber evidence="1">2.4.1.227</ecNumber>
    </recommendedName>
    <alternativeName>
        <fullName evidence="1">Undecaprenyl-PP-MurNAc-pentapeptide-UDPGlcNAc GlcNAc transferase</fullName>
    </alternativeName>
</protein>
<keyword id="KW-0131">Cell cycle</keyword>
<keyword id="KW-0132">Cell division</keyword>
<keyword id="KW-0997">Cell inner membrane</keyword>
<keyword id="KW-1003">Cell membrane</keyword>
<keyword id="KW-0133">Cell shape</keyword>
<keyword id="KW-0961">Cell wall biogenesis/degradation</keyword>
<keyword id="KW-0328">Glycosyltransferase</keyword>
<keyword id="KW-0472">Membrane</keyword>
<keyword id="KW-0573">Peptidoglycan synthesis</keyword>
<keyword id="KW-0808">Transferase</keyword>
<gene>
    <name evidence="1" type="primary">murG</name>
    <name type="ordered locus">SeAg_B0145</name>
</gene>
<dbReference type="EC" id="2.4.1.227" evidence="1"/>
<dbReference type="EMBL" id="CP001138">
    <property type="protein sequence ID" value="ACH51932.1"/>
    <property type="molecule type" value="Genomic_DNA"/>
</dbReference>
<dbReference type="RefSeq" id="WP_000016613.1">
    <property type="nucleotide sequence ID" value="NC_011149.1"/>
</dbReference>
<dbReference type="SMR" id="B5F7W4"/>
<dbReference type="CAZy" id="GT28">
    <property type="family name" value="Glycosyltransferase Family 28"/>
</dbReference>
<dbReference type="KEGG" id="sea:SeAg_B0145"/>
<dbReference type="HOGENOM" id="CLU_037404_2_0_6"/>
<dbReference type="UniPathway" id="UPA00219"/>
<dbReference type="Proteomes" id="UP000008819">
    <property type="component" value="Chromosome"/>
</dbReference>
<dbReference type="GO" id="GO:0005886">
    <property type="term" value="C:plasma membrane"/>
    <property type="evidence" value="ECO:0007669"/>
    <property type="project" value="UniProtKB-SubCell"/>
</dbReference>
<dbReference type="GO" id="GO:0051991">
    <property type="term" value="F:UDP-N-acetyl-D-glucosamine:N-acetylmuramoyl-L-alanyl-D-glutamyl-meso-2,6-diaminopimelyl-D-alanyl-D-alanine-diphosphoundecaprenol 4-beta-N-acetylglucosaminlytransferase activity"/>
    <property type="evidence" value="ECO:0007669"/>
    <property type="project" value="RHEA"/>
</dbReference>
<dbReference type="GO" id="GO:0050511">
    <property type="term" value="F:undecaprenyldiphospho-muramoylpentapeptide beta-N-acetylglucosaminyltransferase activity"/>
    <property type="evidence" value="ECO:0007669"/>
    <property type="project" value="UniProtKB-UniRule"/>
</dbReference>
<dbReference type="GO" id="GO:0005975">
    <property type="term" value="P:carbohydrate metabolic process"/>
    <property type="evidence" value="ECO:0007669"/>
    <property type="project" value="InterPro"/>
</dbReference>
<dbReference type="GO" id="GO:0051301">
    <property type="term" value="P:cell division"/>
    <property type="evidence" value="ECO:0007669"/>
    <property type="project" value="UniProtKB-KW"/>
</dbReference>
<dbReference type="GO" id="GO:0071555">
    <property type="term" value="P:cell wall organization"/>
    <property type="evidence" value="ECO:0007669"/>
    <property type="project" value="UniProtKB-KW"/>
</dbReference>
<dbReference type="GO" id="GO:0030259">
    <property type="term" value="P:lipid glycosylation"/>
    <property type="evidence" value="ECO:0007669"/>
    <property type="project" value="UniProtKB-UniRule"/>
</dbReference>
<dbReference type="GO" id="GO:0009252">
    <property type="term" value="P:peptidoglycan biosynthetic process"/>
    <property type="evidence" value="ECO:0007669"/>
    <property type="project" value="UniProtKB-UniRule"/>
</dbReference>
<dbReference type="GO" id="GO:0008360">
    <property type="term" value="P:regulation of cell shape"/>
    <property type="evidence" value="ECO:0007669"/>
    <property type="project" value="UniProtKB-KW"/>
</dbReference>
<dbReference type="CDD" id="cd03785">
    <property type="entry name" value="GT28_MurG"/>
    <property type="match status" value="1"/>
</dbReference>
<dbReference type="FunFam" id="3.40.50.2000:FF:000016">
    <property type="entry name" value="UDP-N-acetylglucosamine--N-acetylmuramyl-(pentapeptide) pyrophosphoryl-undecaprenol N-acetylglucosamine transferase"/>
    <property type="match status" value="1"/>
</dbReference>
<dbReference type="FunFam" id="3.40.50.2000:FF:000018">
    <property type="entry name" value="UDP-N-acetylglucosamine--N-acetylmuramyl-(pentapeptide) pyrophosphoryl-undecaprenol N-acetylglucosamine transferase"/>
    <property type="match status" value="1"/>
</dbReference>
<dbReference type="Gene3D" id="3.40.50.2000">
    <property type="entry name" value="Glycogen Phosphorylase B"/>
    <property type="match status" value="2"/>
</dbReference>
<dbReference type="HAMAP" id="MF_00033">
    <property type="entry name" value="MurG"/>
    <property type="match status" value="1"/>
</dbReference>
<dbReference type="InterPro" id="IPR006009">
    <property type="entry name" value="GlcNAc_MurG"/>
</dbReference>
<dbReference type="InterPro" id="IPR007235">
    <property type="entry name" value="Glyco_trans_28_C"/>
</dbReference>
<dbReference type="InterPro" id="IPR004276">
    <property type="entry name" value="GlycoTrans_28_N"/>
</dbReference>
<dbReference type="NCBIfam" id="TIGR01133">
    <property type="entry name" value="murG"/>
    <property type="match status" value="1"/>
</dbReference>
<dbReference type="PANTHER" id="PTHR21015:SF22">
    <property type="entry name" value="GLYCOSYLTRANSFERASE"/>
    <property type="match status" value="1"/>
</dbReference>
<dbReference type="PANTHER" id="PTHR21015">
    <property type="entry name" value="UDP-N-ACETYLGLUCOSAMINE--N-ACETYLMURAMYL-(PENTAPEPTIDE) PYROPHOSPHORYL-UNDECAPRENOL N-ACETYLGLUCOSAMINE TRANSFERASE 1"/>
    <property type="match status" value="1"/>
</dbReference>
<dbReference type="Pfam" id="PF04101">
    <property type="entry name" value="Glyco_tran_28_C"/>
    <property type="match status" value="1"/>
</dbReference>
<dbReference type="Pfam" id="PF03033">
    <property type="entry name" value="Glyco_transf_28"/>
    <property type="match status" value="1"/>
</dbReference>
<dbReference type="SUPFAM" id="SSF53756">
    <property type="entry name" value="UDP-Glycosyltransferase/glycogen phosphorylase"/>
    <property type="match status" value="1"/>
</dbReference>
<sequence length="355" mass="37863">MSGQPKRLMVMAGGTGGHVFPGLAVAHHLMAQGWQVRWLGTADRMEADLVPKHGIDIDFIRISGLRGKGVKALLAAPLRIFNAWRQARAIMKRFKPDVVLGMGGYVSGPGGLAAWSLGIPVVLHEQNGIAGLTNQWLAKIATTVMQAFPGAFPNAEVVGNPVRTDVLALPLPQVRLAGRDGPIRVLVVGGSQGARVLNQTMPQVAARLGDTVTIWHQSGKGAQLTVEQAYAGAGQPQHKVTEFIDDMAAAYAWADVVVCRSGALTVSEIAAAGLPAIFVPFQHKDRQQYWNALPLENAGAAKIFEQPQFTVEAVADTLAGWSREALLTMAERARAVSIPDATERVASEVSRVART</sequence>
<proteinExistence type="inferred from homology"/>
<evidence type="ECO:0000255" key="1">
    <source>
        <dbReference type="HAMAP-Rule" id="MF_00033"/>
    </source>
</evidence>
<name>MURG_SALA4</name>